<name>5MAT_ARATH</name>
<protein>
    <recommendedName>
        <fullName evidence="5">Malonyl-CoA:anthocyanidin 5-O-glucoside-6''-O-malonyltransferase</fullName>
        <ecNumber evidence="3 4">2.3.1.-</ecNumber>
    </recommendedName>
    <alternativeName>
        <fullName>Anthocyanin 5-aromatic acyltransferase-like protein</fullName>
    </alternativeName>
    <alternativeName>
        <fullName evidence="6">Anthocyanin 5-glucoside malonyltransferase</fullName>
        <shortName evidence="6">At5MaT</shortName>
    </alternativeName>
</protein>
<proteinExistence type="evidence at protein level"/>
<organism>
    <name type="scientific">Arabidopsis thaliana</name>
    <name type="common">Mouse-ear cress</name>
    <dbReference type="NCBI Taxonomy" id="3702"/>
    <lineage>
        <taxon>Eukaryota</taxon>
        <taxon>Viridiplantae</taxon>
        <taxon>Streptophyta</taxon>
        <taxon>Embryophyta</taxon>
        <taxon>Tracheophyta</taxon>
        <taxon>Spermatophyta</taxon>
        <taxon>Magnoliopsida</taxon>
        <taxon>eudicotyledons</taxon>
        <taxon>Gunneridae</taxon>
        <taxon>Pentapetalae</taxon>
        <taxon>rosids</taxon>
        <taxon>malvids</taxon>
        <taxon>Brassicales</taxon>
        <taxon>Brassicaceae</taxon>
        <taxon>Camelineae</taxon>
        <taxon>Arabidopsis</taxon>
    </lineage>
</organism>
<comment type="function">
    <text evidence="3 4">Catalyzes the malonylation of the 5-O-glucose residue of anthocyanins, using malonyl-CoA as the malonyl donor. Acts only on anthocyanin substrates containing a 5-O-glucosyl moiety. Acts on the four native A.thaliana anthocyanins, A3, A7, and to a lesser extent, A6 and A10. Can also use the non-native anthocyanin compounds cyanin (cyanidin 3,5-diglucoside), malvin, pelargonidin 3,5-diglucoside, peonidin 3,5-diglucoside, cyanidin 3-coumaroylglucoside 5-glucoside, delphinidin 3-coumaroylrutinoside 5-glucoside and petunidin 3-coumaroylrutinoside 5-glucoside as substrates. Is the sole enzyme responsible for producing malonylated anthocyanin 5-O-glucosides in A.thaliana. Is not able to catalyze acyl transfer using acetyl-CoA, butyryl-CoA, hexanoyl-CoA, benzoyl-CoA, cinnamoyl-CoA, methylmalonyl-CoA, succinyl-CoA, p-coumaroyl-CoA or caffeoyl-CoA.</text>
</comment>
<comment type="catalytic activity">
    <reaction evidence="4">
        <text>anthocyanin A3 + malonyl-CoA = anthocyanin A5 + CoA</text>
        <dbReference type="Rhea" id="RHEA:72871"/>
        <dbReference type="ChEBI" id="CHEBI:57287"/>
        <dbReference type="ChEBI" id="CHEBI:57384"/>
        <dbReference type="ChEBI" id="CHEBI:192536"/>
        <dbReference type="ChEBI" id="CHEBI:192537"/>
    </reaction>
    <physiologicalReaction direction="left-to-right" evidence="4">
        <dbReference type="Rhea" id="RHEA:72872"/>
    </physiologicalReaction>
</comment>
<comment type="catalytic activity">
    <reaction evidence="4">
        <text>anthocyanin A7 + malonyl-CoA = anthocyanin A9 + CoA</text>
        <dbReference type="Rhea" id="RHEA:72875"/>
        <dbReference type="ChEBI" id="CHEBI:57287"/>
        <dbReference type="ChEBI" id="CHEBI:57384"/>
        <dbReference type="ChEBI" id="CHEBI:192542"/>
        <dbReference type="ChEBI" id="CHEBI:192543"/>
    </reaction>
    <physiologicalReaction direction="left-to-right" evidence="4">
        <dbReference type="Rhea" id="RHEA:72876"/>
    </physiologicalReaction>
</comment>
<comment type="catalytic activity">
    <reaction evidence="3 4">
        <text>anthocyanin A6 + malonyl-CoA = anthocyanin A8 + CoA</text>
        <dbReference type="Rhea" id="RHEA:72759"/>
        <dbReference type="ChEBI" id="CHEBI:57287"/>
        <dbReference type="ChEBI" id="CHEBI:57384"/>
        <dbReference type="ChEBI" id="CHEBI:72650"/>
        <dbReference type="ChEBI" id="CHEBI:192528"/>
    </reaction>
    <physiologicalReaction direction="left-to-right" evidence="3 4">
        <dbReference type="Rhea" id="RHEA:72760"/>
    </physiologicalReaction>
</comment>
<comment type="catalytic activity">
    <reaction evidence="3">
        <text>anthocyanin A10 + malonyl-CoA = anthocyanin A11 + CoA</text>
        <dbReference type="Rhea" id="RHEA:72763"/>
        <dbReference type="ChEBI" id="CHEBI:57287"/>
        <dbReference type="ChEBI" id="CHEBI:57384"/>
        <dbReference type="ChEBI" id="CHEBI:72649"/>
        <dbReference type="ChEBI" id="CHEBI:192529"/>
    </reaction>
    <physiologicalReaction direction="left-to-right" evidence="3">
        <dbReference type="Rhea" id="RHEA:72764"/>
    </physiologicalReaction>
</comment>
<comment type="biophysicochemical properties">
    <kinetics>
        <KM evidence="3">167 uM for cyanin</KM>
        <KM evidence="3">2260 uM for malvin</KM>
        <KM evidence="3">70 uM for anthocyanin A6</KM>
        <KM evidence="3">7.6 uM for anthocyanin A10</KM>
        <KM evidence="4">6.6 uM for cyanin</KM>
        <KM evidence="4">4.5 uM for pelargonidin 3,5-diglucoside</KM>
        <KM evidence="4">6.9 uM for peonidin 3,5-diglucoside</KM>
        <KM evidence="3">15.3 uM for malonyl-CoA (with anthocyanin A6 as cosubstrate)</KM>
        <KM evidence="3">2.1 uM for malonyl-CoA (with anthocyanin A10 as cosubstrate)</KM>
        <KM evidence="4">5.5 uM for malonyl-CoA (with cyanin as cosubstrate)</KM>
        <text evidence="3 4">kcat is 0.02 sec(-1) with cyanin as substrate (PubMed:17292360). kcat is 1.79 sec(-1) with malvin as substrate (PubMed:17292360). kcat is 0.12 sec(-1) with anthocyanin A6 as substrate (PubMed:17292360). kcat is 0.00012 sec(-1) anthocyanin A10 as substrate (PubMed:17292360). kcat is 6.4 sec(-1) with cyanin as substrate (PubMed:17425720). kcat is 5.9 sec(-1) with pelargonidin 3,5-diglucoside as substrate (PubMed:17425720). kcat is 6.6 sec(-1) with peonidin 3,5-diglucoside as substrate (PubMed:17425720).</text>
    </kinetics>
    <phDependence>
        <text evidence="3 4">Optimum pH is 6.0-7.5.</text>
    </phDependence>
</comment>
<comment type="tissue specificity">
    <text evidence="4">Expressed in flowers. Detected in leaves, stems, roots and siliques.</text>
</comment>
<comment type="induction">
    <text evidence="4">Up-regulated by high sucrose and by low phosphate stresses.</text>
</comment>
<comment type="disruption phenotype">
    <text evidence="3 4">Absence of malonylated anthocyanins.</text>
</comment>
<comment type="miscellaneous">
    <text evidence="8">The glycosylation of the coumaroyl group in anthocyanins A6 and A10 likely occurs after malonylation of the 5-glucoside by 5MaT, which could explain why this enzyme is more active on anthocyanins A3 and A7 than on A6 and A10.</text>
</comment>
<comment type="similarity">
    <text evidence="7">Belongs to the plant acyltransferase family.</text>
</comment>
<sequence>MVNFNSAVNILEVVQVSPPSSNSLTLPLTYFDLGWLKLHPVDRVLFYHVPELTRSSLISKLKSSLSATLLHYLPLAGRLVWDSIKTKPSIVYSPDDKDAVYLTVAESNGDLSHLSGDEPRPATEFHSLVPELPVSDESARVLAVQVTFFPNQGFSLGVTAHHAVLDGKTTAMFLKAWAHNCKQEQEALPHDLVPSLDRIIVQDPTGLETKLLNRWISASNNKPSLKLFPSKIIGSDILRVTYRLTREDIKKLRERVETESHAKQLRLSTFVITYAYVITCMVKMRGGDPTRFVCVGFASDFRSRLNPPLPPTFFGNCIVGSGDFDVKAEPILEEGEGKGFITAVETLTGWVNGLCPENIEKNMLLPFEAFKRMEPGRQMISVAGSTRLGIYGSDFGWGKPVKVEIVTIDKDASVSLSESGDGSGGVEVGVCLKKDDVERFGSLFSIGLE</sequence>
<keyword id="KW-0007">Acetylation</keyword>
<keyword id="KW-0012">Acyltransferase</keyword>
<keyword id="KW-1185">Reference proteome</keyword>
<keyword id="KW-0808">Transferase</keyword>
<reference key="1">
    <citation type="journal article" date="2000" name="DNA Res.">
        <title>Structural analysis of Arabidopsis thaliana chromosome 3. II. Sequence features of the 4,251,695 bp regions covered by 90 P1, TAC and BAC clones.</title>
        <authorList>
            <person name="Kaneko T."/>
            <person name="Katoh T."/>
            <person name="Sato S."/>
            <person name="Nakamura Y."/>
            <person name="Asamizu E."/>
            <person name="Tabata S."/>
        </authorList>
    </citation>
    <scope>NUCLEOTIDE SEQUENCE [LARGE SCALE GENOMIC DNA]</scope>
    <source>
        <strain>cv. Columbia</strain>
    </source>
</reference>
<reference key="2">
    <citation type="journal article" date="2017" name="Plant J.">
        <title>Araport11: a complete reannotation of the Arabidopsis thaliana reference genome.</title>
        <authorList>
            <person name="Cheng C.Y."/>
            <person name="Krishnakumar V."/>
            <person name="Chan A.P."/>
            <person name="Thibaud-Nissen F."/>
            <person name="Schobel S."/>
            <person name="Town C.D."/>
        </authorList>
    </citation>
    <scope>GENOME REANNOTATION</scope>
    <source>
        <strain>cv. Columbia</strain>
    </source>
</reference>
<reference key="3">
    <citation type="journal article" date="2007" name="FEBS Lett.">
        <title>Identification and characterization of the BAHD acyltransferase malonyl CoA: anthocyanidin 5-O-glucoside-6''-O-malonyltransferase (At5MAT) in Arabidopsis thaliana.</title>
        <authorList>
            <person name="D'Auria J.C."/>
            <person name="Reichelt M."/>
            <person name="Luck K."/>
            <person name="Svatos A."/>
            <person name="Gershenzon J."/>
        </authorList>
    </citation>
    <scope>FUNCTION</scope>
    <scope>CATALYTIC ACTIVITY</scope>
    <scope>SUBSTRATE SPECIFICITY</scope>
    <scope>BIOPHYSICOCHEMICAL PROPERTIES</scope>
    <scope>DISRUPTION PHENOTYPE</scope>
    <source>
        <strain>cv. Columbia</strain>
    </source>
</reference>
<reference key="4">
    <citation type="journal article" date="2007" name="Plant J.">
        <title>Convergent evolution in the BAHD family of acyl transferases: identification and characterization of anthocyanin acyl transferases from Arabidopsis thaliana.</title>
        <authorList>
            <person name="Luo J."/>
            <person name="Nishiyama Y."/>
            <person name="Fuell C."/>
            <person name="Taguchi G."/>
            <person name="Elliott K."/>
            <person name="Hill L."/>
            <person name="Tanaka Y."/>
            <person name="Kitayama M."/>
            <person name="Yamazaki M."/>
            <person name="Bailey P."/>
            <person name="Parr A."/>
            <person name="Michael A.J."/>
            <person name="Saito K."/>
            <person name="Martin C."/>
        </authorList>
    </citation>
    <scope>FUNCTION</scope>
    <scope>CATALYTIC ACTIVITY</scope>
    <scope>SUBSTRATE SPECIFICITY</scope>
    <scope>BIOPHYSICOCHEMICAL PROPERTIES</scope>
    <scope>DISRUPTION PHENOTYPE</scope>
    <scope>INDUCTION</scope>
    <scope>TISSUE SPECIFICITY</scope>
    <source>
        <strain>cv. Columbia</strain>
    </source>
</reference>
<reference key="5">
    <citation type="journal article" date="2013" name="Plant Physiol. Biochem.">
        <title>The flavonoid biosynthetic pathway in Arabidopsis: Structural and genetic diversity.</title>
        <authorList>
            <person name="Saito K."/>
            <person name="Yonekura-Sakakibara K."/>
            <person name="Nakabayashi R."/>
            <person name="Higashi Y."/>
            <person name="Yamazaki M."/>
            <person name="Tohge T."/>
            <person name="Fernie A.R."/>
        </authorList>
    </citation>
    <scope>REVIEW</scope>
    <scope>NOMENCLATURE</scope>
</reference>
<evidence type="ECO:0000250" key="1"/>
<evidence type="ECO:0000250" key="2">
    <source>
        <dbReference type="UniProtKB" id="Q940Z5"/>
    </source>
</evidence>
<evidence type="ECO:0000269" key="3">
    <source>
    </source>
</evidence>
<evidence type="ECO:0000269" key="4">
    <source>
    </source>
</evidence>
<evidence type="ECO:0000303" key="5">
    <source>
    </source>
</evidence>
<evidence type="ECO:0000303" key="6">
    <source>
    </source>
</evidence>
<evidence type="ECO:0000305" key="7"/>
<evidence type="ECO:0000305" key="8">
    <source>
    </source>
</evidence>
<accession>Q9LJB4</accession>
<gene>
    <name type="primary">5MAT</name>
    <name type="ordered locus">At3g29590</name>
    <name type="ORF">MTO24.5</name>
</gene>
<feature type="chain" id="PRO_0000419539" description="Malonyl-CoA:anthocyanidin 5-O-glucoside-6''-O-malonyltransferase">
    <location>
        <begin position="1"/>
        <end position="449"/>
    </location>
</feature>
<feature type="active site" description="Proton acceptor" evidence="1">
    <location>
        <position position="162"/>
    </location>
</feature>
<feature type="active site" description="Proton acceptor" evidence="1">
    <location>
        <position position="394"/>
    </location>
</feature>
<feature type="modified residue" description="N-acetylmethionine" evidence="2">
    <location>
        <position position="1"/>
    </location>
</feature>
<dbReference type="EC" id="2.3.1.-" evidence="3 4"/>
<dbReference type="EMBL" id="AP000606">
    <property type="protein sequence ID" value="BAB01191.1"/>
    <property type="molecule type" value="Genomic_DNA"/>
</dbReference>
<dbReference type="EMBL" id="CP002686">
    <property type="protein sequence ID" value="AEE77592.1"/>
    <property type="molecule type" value="Genomic_DNA"/>
</dbReference>
<dbReference type="SMR" id="Q9LJB4"/>
<dbReference type="FunCoup" id="Q9LJB4">
    <property type="interactions" value="2"/>
</dbReference>
<dbReference type="STRING" id="3702.Q9LJB4"/>
<dbReference type="iPTMnet" id="Q9LJB4"/>
<dbReference type="PaxDb" id="3702-AT3G29590.1"/>
<dbReference type="ProteomicsDB" id="244555"/>
<dbReference type="DNASU" id="822623"/>
<dbReference type="EnsemblPlants" id="AT3G29590.1">
    <property type="protein sequence ID" value="AT3G29590.1"/>
    <property type="gene ID" value="AT3G29590"/>
</dbReference>
<dbReference type="Gramene" id="AT3G29590.1">
    <property type="protein sequence ID" value="AT3G29590.1"/>
    <property type="gene ID" value="AT3G29590"/>
</dbReference>
<dbReference type="KEGG" id="ath:AT3G29590"/>
<dbReference type="Araport" id="AT3G29590"/>
<dbReference type="TAIR" id="AT3G29590">
    <property type="gene designation" value="AT5MAT"/>
</dbReference>
<dbReference type="eggNOG" id="ENOG502QPXT">
    <property type="taxonomic scope" value="Eukaryota"/>
</dbReference>
<dbReference type="HOGENOM" id="CLU_014546_7_0_1"/>
<dbReference type="InParanoid" id="Q9LJB4"/>
<dbReference type="OMA" id="NRWMSAS"/>
<dbReference type="PhylomeDB" id="Q9LJB4"/>
<dbReference type="BioCyc" id="ARA:AT3G29590-MONOMER"/>
<dbReference type="BioCyc" id="MetaCyc:MONOMER-18509"/>
<dbReference type="BRENDA" id="2.3.1.172">
    <property type="organism ID" value="399"/>
</dbReference>
<dbReference type="PRO" id="PR:Q9LJB4"/>
<dbReference type="Proteomes" id="UP000006548">
    <property type="component" value="Chromosome 3"/>
</dbReference>
<dbReference type="ExpressionAtlas" id="Q9LJB4">
    <property type="expression patterns" value="baseline and differential"/>
</dbReference>
<dbReference type="GO" id="GO:0102585">
    <property type="term" value="F:cyanidin 3-O-[2''-O-(xylosyl)-6''-O-(p-coumaroyl) glucoside] 5-O-glucoside malonyltransferase activity"/>
    <property type="evidence" value="ECO:0007669"/>
    <property type="project" value="RHEA"/>
</dbReference>
<dbReference type="GO" id="GO:0050736">
    <property type="term" value="F:O-malonyltransferase activity"/>
    <property type="evidence" value="ECO:0000314"/>
    <property type="project" value="TAIR"/>
</dbReference>
<dbReference type="GO" id="GO:0009718">
    <property type="term" value="P:anthocyanin-containing compound biosynthetic process"/>
    <property type="evidence" value="ECO:0000314"/>
    <property type="project" value="TAIR"/>
</dbReference>
<dbReference type="FunFam" id="3.30.559.10:FF:000035">
    <property type="entry name" value="Phenolic glucoside malonyltransferase 1"/>
    <property type="match status" value="1"/>
</dbReference>
<dbReference type="FunFam" id="3.30.559.10:FF:000046">
    <property type="entry name" value="Phenolic glucoside malonyltransferase 1"/>
    <property type="match status" value="1"/>
</dbReference>
<dbReference type="Gene3D" id="3.30.559.10">
    <property type="entry name" value="Chloramphenicol acetyltransferase-like domain"/>
    <property type="match status" value="2"/>
</dbReference>
<dbReference type="InterPro" id="IPR023213">
    <property type="entry name" value="CAT-like_dom_sf"/>
</dbReference>
<dbReference type="InterPro" id="IPR051504">
    <property type="entry name" value="Plant_metabolite_acyltrans"/>
</dbReference>
<dbReference type="PANTHER" id="PTHR31625">
    <property type="match status" value="1"/>
</dbReference>
<dbReference type="Pfam" id="PF02458">
    <property type="entry name" value="Transferase"/>
    <property type="match status" value="1"/>
</dbReference>
<dbReference type="SUPFAM" id="SSF52777">
    <property type="entry name" value="CoA-dependent acyltransferases"/>
    <property type="match status" value="2"/>
</dbReference>